<sequence>MPERLQVYKCEVCGNIVEVLNGGIGELVCCNQDMKLMSENTVDAAKEKHVPVIEKIDGGYKVKVGAVAHPMEEKHYIQWIELLADDKCYTQFLKPGQAPEAVFLIEAAKVVAREYCNIHGHWKAEN</sequence>
<accession>Q46495</accession>
<accession>E1QI98</accession>
<comment type="function">
    <text evidence="1">Catalyzes the one-electron reduction of superoxide anion radical to hydrogen peroxide at a nonheme ferrous iron center. Plays a fundamental role in case of oxidative stress via its superoxide detoxification activity.</text>
</comment>
<comment type="catalytic activity">
    <reaction evidence="1">
        <text>reduced [rubredoxin] + superoxide + 2 H(+) = oxidized [rubredoxin] + H2O2</text>
        <dbReference type="Rhea" id="RHEA:21324"/>
        <dbReference type="Rhea" id="RHEA-COMP:10302"/>
        <dbReference type="Rhea" id="RHEA-COMP:10303"/>
        <dbReference type="ChEBI" id="CHEBI:15378"/>
        <dbReference type="ChEBI" id="CHEBI:16240"/>
        <dbReference type="ChEBI" id="CHEBI:18421"/>
        <dbReference type="ChEBI" id="CHEBI:29033"/>
        <dbReference type="ChEBI" id="CHEBI:29034"/>
        <dbReference type="EC" id="1.15.1.2"/>
    </reaction>
</comment>
<comment type="cofactor">
    <cofactor evidence="3">
        <name>Fe(3+)</name>
        <dbReference type="ChEBI" id="CHEBI:29034"/>
    </cofactor>
    <text evidence="3">Binds 1 Fe(3+) ion per subunit. The iron ion 1 is coordinated via 4 cysteine residues.</text>
</comment>
<comment type="cofactor">
    <cofactor evidence="3">
        <name>Cu(2+)</name>
        <dbReference type="ChEBI" id="CHEBI:29036"/>
    </cofactor>
    <text evidence="3">Binds 1 Fe(2+) ion per subunit. The iron ion 2 is coordinated via four histidines and one cysteine residue.</text>
</comment>
<comment type="subunit">
    <text evidence="1 3">Homodimer.</text>
</comment>
<comment type="domain">
    <text>Is organized in two protein domains. The N-terminal domain has a fold similar to that of desulforedoxin and contains a mononuclear Fe(3+) ion, center I. The second domain contains a different mononuclear iron center, center II, with a Fe(2+) ion.</text>
</comment>
<comment type="mass spectrometry"/>
<comment type="miscellaneous">
    <text>Catalysis occurs at center II. Fe(2+) ion of center II is the electron donor and is converted to the Fe(3+) form during the reaction.</text>
</comment>
<comment type="miscellaneous">
    <text>The protein sequence in PubMed:10617593 comes from protein overexpressed and processed in E.coli.</text>
</comment>
<comment type="similarity">
    <text evidence="4">Belongs to the desulfoferrodoxin family.</text>
</comment>
<comment type="caution">
    <text evidence="5">Was originally thought to be a rubredoxin oxidoreductase.</text>
</comment>
<feature type="initiator methionine" description="Removed" evidence="1">
    <location>
        <position position="1"/>
    </location>
</feature>
<feature type="chain" id="PRO_0000140863" description="Desulfoferrodoxin">
    <location>
        <begin position="2"/>
        <end position="126"/>
    </location>
</feature>
<feature type="binding site">
    <location>
        <position position="10"/>
    </location>
    <ligand>
        <name>Fe cation</name>
        <dbReference type="ChEBI" id="CHEBI:24875"/>
        <label>1</label>
    </ligand>
</feature>
<feature type="binding site">
    <location>
        <position position="13"/>
    </location>
    <ligand>
        <name>Fe cation</name>
        <dbReference type="ChEBI" id="CHEBI:24875"/>
        <label>1</label>
    </ligand>
</feature>
<feature type="binding site">
    <location>
        <position position="29"/>
    </location>
    <ligand>
        <name>Fe cation</name>
        <dbReference type="ChEBI" id="CHEBI:24875"/>
        <label>1</label>
    </ligand>
</feature>
<feature type="binding site">
    <location>
        <position position="30"/>
    </location>
    <ligand>
        <name>Fe cation</name>
        <dbReference type="ChEBI" id="CHEBI:24875"/>
        <label>1</label>
    </ligand>
</feature>
<feature type="binding site">
    <location>
        <position position="49"/>
    </location>
    <ligand>
        <name>Fe cation</name>
        <dbReference type="ChEBI" id="CHEBI:24875"/>
        <label>2</label>
        <note>catalytic</note>
    </ligand>
</feature>
<feature type="binding site">
    <location>
        <position position="69"/>
    </location>
    <ligand>
        <name>Fe cation</name>
        <dbReference type="ChEBI" id="CHEBI:24875"/>
        <label>2</label>
        <note>catalytic</note>
    </ligand>
</feature>
<feature type="binding site">
    <location>
        <position position="75"/>
    </location>
    <ligand>
        <name>Fe cation</name>
        <dbReference type="ChEBI" id="CHEBI:24875"/>
        <label>2</label>
        <note>catalytic</note>
    </ligand>
</feature>
<feature type="binding site">
    <location>
        <position position="116"/>
    </location>
    <ligand>
        <name>Fe cation</name>
        <dbReference type="ChEBI" id="CHEBI:24875"/>
        <label>2</label>
        <note>catalytic</note>
    </ligand>
</feature>
<feature type="binding site">
    <location>
        <position position="119"/>
    </location>
    <ligand>
        <name>Fe cation</name>
        <dbReference type="ChEBI" id="CHEBI:24875"/>
        <label>2</label>
        <note>catalytic</note>
    </ligand>
</feature>
<feature type="mutagenesis site" description="No effect." evidence="2">
    <original>E</original>
    <variation>A</variation>
    <location>
        <position position="47"/>
    </location>
</feature>
<feature type="mutagenesis site" description="Decrease in reaction rate." evidence="2">
    <original>K</original>
    <variation>I</variation>
    <location>
        <position position="48"/>
    </location>
</feature>
<feature type="strand" evidence="6">
    <location>
        <begin position="7"/>
        <end position="9"/>
    </location>
</feature>
<feature type="turn" evidence="6">
    <location>
        <begin position="11"/>
        <end position="13"/>
    </location>
</feature>
<feature type="strand" evidence="6">
    <location>
        <begin position="16"/>
        <end position="21"/>
    </location>
</feature>
<feature type="strand" evidence="6">
    <location>
        <begin position="27"/>
        <end position="29"/>
    </location>
</feature>
<feature type="strand" evidence="6">
    <location>
        <begin position="42"/>
        <end position="44"/>
    </location>
</feature>
<feature type="helix" evidence="6">
    <location>
        <begin position="46"/>
        <end position="49"/>
    </location>
</feature>
<feature type="strand" evidence="6">
    <location>
        <begin position="50"/>
        <end position="56"/>
    </location>
</feature>
<feature type="strand" evidence="6">
    <location>
        <begin position="59"/>
        <end position="64"/>
    </location>
</feature>
<feature type="turn" evidence="6">
    <location>
        <begin position="65"/>
        <end position="68"/>
    </location>
</feature>
<feature type="strand" evidence="7">
    <location>
        <begin position="73"/>
        <end position="75"/>
    </location>
</feature>
<feature type="strand" evidence="6">
    <location>
        <begin position="77"/>
        <end position="84"/>
    </location>
</feature>
<feature type="strand" evidence="6">
    <location>
        <begin position="87"/>
        <end position="92"/>
    </location>
</feature>
<feature type="strand" evidence="6">
    <location>
        <begin position="99"/>
        <end position="104"/>
    </location>
</feature>
<feature type="strand" evidence="6">
    <location>
        <begin position="111"/>
        <end position="116"/>
    </location>
</feature>
<feature type="turn" evidence="6">
    <location>
        <begin position="117"/>
        <end position="119"/>
    </location>
</feature>
<feature type="strand" evidence="6">
    <location>
        <begin position="120"/>
        <end position="125"/>
    </location>
</feature>
<dbReference type="EC" id="1.15.1.2"/>
<dbReference type="EMBL" id="X99543">
    <property type="protein sequence ID" value="CAA67880.1"/>
    <property type="molecule type" value="Genomic_DNA"/>
</dbReference>
<dbReference type="EMBL" id="CP002085">
    <property type="protein sequence ID" value="ADK85415.1"/>
    <property type="molecule type" value="Genomic_DNA"/>
</dbReference>
<dbReference type="RefSeq" id="WP_013258856.1">
    <property type="nucleotide sequence ID" value="NC_014365.1"/>
</dbReference>
<dbReference type="PDB" id="1VZG">
    <property type="method" value="X-ray"/>
    <property type="resolution" value="1.69 A"/>
    <property type="chains" value="A/B=1-126"/>
</dbReference>
<dbReference type="PDB" id="1VZH">
    <property type="method" value="X-ray"/>
    <property type="resolution" value="1.69 A"/>
    <property type="chains" value="A/B=1-126"/>
</dbReference>
<dbReference type="PDB" id="1VZI">
    <property type="method" value="X-ray"/>
    <property type="resolution" value="1.15 A"/>
    <property type="chains" value="A/B=1-126"/>
</dbReference>
<dbReference type="PDB" id="2JI1">
    <property type="method" value="X-ray"/>
    <property type="resolution" value="1.70 A"/>
    <property type="chains" value="A/B/C/D=2-126"/>
</dbReference>
<dbReference type="PDB" id="2JI2">
    <property type="method" value="X-ray"/>
    <property type="resolution" value="1.70 A"/>
    <property type="chains" value="A/B/C/D=2-126"/>
</dbReference>
<dbReference type="PDB" id="2JI3">
    <property type="method" value="X-ray"/>
    <property type="resolution" value="1.95 A"/>
    <property type="chains" value="A/B/C/D=2-126"/>
</dbReference>
<dbReference type="PDBsum" id="1VZG"/>
<dbReference type="PDBsum" id="1VZH"/>
<dbReference type="PDBsum" id="1VZI"/>
<dbReference type="PDBsum" id="2JI1"/>
<dbReference type="PDBsum" id="2JI2"/>
<dbReference type="PDBsum" id="2JI3"/>
<dbReference type="SMR" id="Q46495"/>
<dbReference type="STRING" id="644282.Deba_2050"/>
<dbReference type="KEGG" id="dbr:Deba_2050"/>
<dbReference type="eggNOG" id="COG2033">
    <property type="taxonomic scope" value="Bacteria"/>
</dbReference>
<dbReference type="HOGENOM" id="CLU_118960_1_0_7"/>
<dbReference type="OrthoDB" id="9814936at2"/>
<dbReference type="BRENDA" id="1.15.1.2">
    <property type="organism ID" value="1883"/>
</dbReference>
<dbReference type="EvolutionaryTrace" id="Q46495"/>
<dbReference type="Proteomes" id="UP000009047">
    <property type="component" value="Chromosome"/>
</dbReference>
<dbReference type="GO" id="GO:0005506">
    <property type="term" value="F:iron ion binding"/>
    <property type="evidence" value="ECO:0007669"/>
    <property type="project" value="InterPro"/>
</dbReference>
<dbReference type="GO" id="GO:0050605">
    <property type="term" value="F:superoxide reductase activity"/>
    <property type="evidence" value="ECO:0007669"/>
    <property type="project" value="UniProtKB-EC"/>
</dbReference>
<dbReference type="GO" id="GO:0019430">
    <property type="term" value="P:removal of superoxide radicals"/>
    <property type="evidence" value="ECO:0007669"/>
    <property type="project" value="InterPro"/>
</dbReference>
<dbReference type="CDD" id="cd00974">
    <property type="entry name" value="DSRD"/>
    <property type="match status" value="1"/>
</dbReference>
<dbReference type="CDD" id="cd03171">
    <property type="entry name" value="SORL_Dfx_classI"/>
    <property type="match status" value="1"/>
</dbReference>
<dbReference type="Gene3D" id="2.20.28.100">
    <property type="entry name" value="Desulphoferrodoxin, N-terminal domain"/>
    <property type="match status" value="1"/>
</dbReference>
<dbReference type="Gene3D" id="2.60.40.730">
    <property type="entry name" value="SOR catalytic domain"/>
    <property type="match status" value="1"/>
</dbReference>
<dbReference type="InterPro" id="IPR002742">
    <property type="entry name" value="Desulfoferrodoxin_Fe-bd_dom"/>
</dbReference>
<dbReference type="InterPro" id="IPR036073">
    <property type="entry name" value="Desulfoferrodoxin_Fe-bd_dom_sf"/>
</dbReference>
<dbReference type="InterPro" id="IPR004462">
    <property type="entry name" value="Desulfoferrodoxin_N"/>
</dbReference>
<dbReference type="InterPro" id="IPR038094">
    <property type="entry name" value="Desulfoferrodoxin_N_sf"/>
</dbReference>
<dbReference type="InterPro" id="IPR004793">
    <property type="entry name" value="Desulfoferrodoxin_rbo"/>
</dbReference>
<dbReference type="InterPro" id="IPR051233">
    <property type="entry name" value="Desulfoferrodoxin_SOR"/>
</dbReference>
<dbReference type="NCBIfam" id="TIGR00319">
    <property type="entry name" value="desulf_FeS4"/>
    <property type="match status" value="1"/>
</dbReference>
<dbReference type="NCBIfam" id="TIGR00320">
    <property type="entry name" value="dfx_rbo"/>
    <property type="match status" value="1"/>
</dbReference>
<dbReference type="NCBIfam" id="TIGR00332">
    <property type="entry name" value="neela_ferrous"/>
    <property type="match status" value="1"/>
</dbReference>
<dbReference type="PANTHER" id="PTHR36541">
    <property type="entry name" value="SUPEROXIDE REDUCTASE-RELATED"/>
    <property type="match status" value="1"/>
</dbReference>
<dbReference type="PANTHER" id="PTHR36541:SF1">
    <property type="entry name" value="SUPEROXIDE REDUCTASE-RELATED"/>
    <property type="match status" value="1"/>
</dbReference>
<dbReference type="Pfam" id="PF06397">
    <property type="entry name" value="Desulfoferrod_N"/>
    <property type="match status" value="1"/>
</dbReference>
<dbReference type="Pfam" id="PF01880">
    <property type="entry name" value="Desulfoferrodox"/>
    <property type="match status" value="1"/>
</dbReference>
<dbReference type="SUPFAM" id="SSF57802">
    <property type="entry name" value="Rubredoxin-like"/>
    <property type="match status" value="1"/>
</dbReference>
<dbReference type="SUPFAM" id="SSF49367">
    <property type="entry name" value="Superoxide reductase-like"/>
    <property type="match status" value="1"/>
</dbReference>
<reference key="1">
    <citation type="journal article" date="1996" name="J. Bacteriol.">
        <title>Overproduction of the rbo gene product from Desulfovibrio species suppresses all deleterious effects of lack of superoxide dismutase in Escherichia coli.</title>
        <authorList>
            <person name="Pianzzola M.J."/>
            <person name="Soubes M."/>
            <person name="Touati D."/>
        </authorList>
    </citation>
    <scope>NUCLEOTIDE SEQUENCE [GENOMIC DNA]</scope>
    <source>
        <strain>ATCC 33931 / DSM 2075 / LMG 7858 / VKM B-1802 / 2st14</strain>
    </source>
</reference>
<reference key="2">
    <citation type="journal article" date="2010" name="Stand. Genomic Sci.">
        <title>Complete genome sequence of Desulfarculus baarsii type strain (2st14).</title>
        <authorList>
            <person name="Sun H."/>
            <person name="Spring S."/>
            <person name="Lapidus A."/>
            <person name="Davenport K."/>
            <person name="Del Rio T.G."/>
            <person name="Tice H."/>
            <person name="Nolan M."/>
            <person name="Copeland A."/>
            <person name="Cheng J.F."/>
            <person name="Lucas S."/>
            <person name="Tapia R."/>
            <person name="Goodwin L."/>
            <person name="Pitluck S."/>
            <person name="Ivanova N."/>
            <person name="Pagani I."/>
            <person name="Mavromatis K."/>
            <person name="Ovchinnikova G."/>
            <person name="Pati A."/>
            <person name="Chen A."/>
            <person name="Palaniappan K."/>
            <person name="Hauser L."/>
            <person name="Chang Y.J."/>
            <person name="Jeffries C.D."/>
            <person name="Detter J.C."/>
            <person name="Han C."/>
            <person name="Rohde M."/>
            <person name="Brambilla E."/>
            <person name="Goker M."/>
            <person name="Woyke T."/>
            <person name="Bristow J."/>
            <person name="Eisen J.A."/>
            <person name="Markowitz V."/>
            <person name="Hugenholtz P."/>
            <person name="Kyrpides N.C."/>
            <person name="Klenk H.P."/>
            <person name="Land M."/>
        </authorList>
    </citation>
    <scope>NUCLEOTIDE SEQUENCE [LARGE SCALE GENOMIC DNA]</scope>
    <source>
        <strain>ATCC 33931 / DSM 2075 / LMG 7858 / VKM B-1802 / 2st14</strain>
    </source>
</reference>
<reference key="3">
    <citation type="journal article" date="2000" name="J. Biol. Chem.">
        <title>Reaction of the desulfoferrodoxin from Desulfoarculus baarsii with superoxide anion. Evidence for a superoxide reductase activity.</title>
        <authorList>
            <person name="Lombard M."/>
            <person name="Fontecave M."/>
            <person name="Touati D."/>
            <person name="Niviere V."/>
        </authorList>
    </citation>
    <scope>PROTEIN SEQUENCE OF 2-11</scope>
    <scope>FUNCTION</scope>
    <scope>CATALYTIC ACTIVITY</scope>
    <scope>SUBUNIT</scope>
    <scope>MASS SPECTROMETRY</scope>
    <scope>ABSORPTION SPECTROSCOPY</scope>
    <scope>EPR SPECTROSCOPY</scope>
    <scope>KINETIC STUDIES</scope>
</reference>
<reference key="4">
    <citation type="journal article" date="2001" name="Biochemistry">
        <title>Superoxide reductase from Desulfoarculus baarsii: reaction mechanism and role of glutamate 47 and lysine 48 in catalysis.</title>
        <authorList>
            <person name="Lombard M."/>
            <person name="Houee-Levin C."/>
            <person name="Touati D."/>
            <person name="Fontecave M."/>
            <person name="Niviere V."/>
        </authorList>
    </citation>
    <scope>MUTAGENESIS OF GLU-47 AND LYS-48</scope>
</reference>
<reference key="5">
    <citation type="journal article" date="2004" name="Structure">
        <title>Structure of superoxide reductase bound to ferrocyanide and active site expansion upon X-ray-induced photo-reduction.</title>
        <authorList>
            <person name="Adam V."/>
            <person name="Royant A."/>
            <person name="Niviere V."/>
            <person name="Molina-Heredia F.P."/>
            <person name="Bourgeois D."/>
        </authorList>
    </citation>
    <scope>X-RAY CRYSTALLOGRAPHY (1.15 ANGSTROMS) OF MUTANT ALA-47 UNCOMPLEXED AND IN COMPLEX WITH FERROCYANIDE</scope>
    <scope>COFACTOR</scope>
    <scope>SUBUNIT</scope>
</reference>
<keyword id="KW-0002">3D-structure</keyword>
<keyword id="KW-0216">Detoxification</keyword>
<keyword id="KW-0903">Direct protein sequencing</keyword>
<keyword id="KW-0249">Electron transport</keyword>
<keyword id="KW-0408">Iron</keyword>
<keyword id="KW-0479">Metal-binding</keyword>
<keyword id="KW-0560">Oxidoreductase</keyword>
<keyword id="KW-1185">Reference proteome</keyword>
<keyword id="KW-0813">Transport</keyword>
<proteinExistence type="evidence at protein level"/>
<evidence type="ECO:0000269" key="1">
    <source>
    </source>
</evidence>
<evidence type="ECO:0000269" key="2">
    <source>
    </source>
</evidence>
<evidence type="ECO:0000269" key="3">
    <source>
    </source>
</evidence>
<evidence type="ECO:0000305" key="4"/>
<evidence type="ECO:0000305" key="5">
    <source>
    </source>
</evidence>
<evidence type="ECO:0007829" key="6">
    <source>
        <dbReference type="PDB" id="1VZI"/>
    </source>
</evidence>
<evidence type="ECO:0007829" key="7">
    <source>
        <dbReference type="PDB" id="2JI3"/>
    </source>
</evidence>
<protein>
    <recommendedName>
        <fullName>Desulfoferrodoxin</fullName>
        <shortName>Dfx</shortName>
        <ecNumber>1.15.1.2</ecNumber>
    </recommendedName>
    <alternativeName>
        <fullName>Superoxide reductase</fullName>
        <shortName>SOR</shortName>
    </alternativeName>
</protein>
<gene>
    <name type="primary">dfx</name>
    <name type="synonym">rbo</name>
    <name type="ordered locus">Deba_2050</name>
</gene>
<name>DFX_DESB2</name>
<organism>
    <name type="scientific">Desulfarculus baarsii (strain ATCC 33931 / DSM 2075 / LMG 7858 / VKM B-1802 / 2st14)</name>
    <dbReference type="NCBI Taxonomy" id="644282"/>
    <lineage>
        <taxon>Bacteria</taxon>
        <taxon>Pseudomonadati</taxon>
        <taxon>Thermodesulfobacteriota</taxon>
        <taxon>Desulfarculia</taxon>
        <taxon>Desulfarculales</taxon>
        <taxon>Desulfarculaceae</taxon>
        <taxon>Desulfarculus</taxon>
    </lineage>
</organism>